<keyword id="KW-0131">Cell cycle</keyword>
<keyword id="KW-0132">Cell division</keyword>
<keyword id="KW-0159">Chromosome partition</keyword>
<keyword id="KW-0963">Cytoplasm</keyword>
<keyword id="KW-0229">DNA integration</keyword>
<keyword id="KW-0233">DNA recombination</keyword>
<keyword id="KW-0238">DNA-binding</keyword>
<gene>
    <name evidence="1" type="primary">xerC</name>
    <name type="ordered locus">LMOf2365_1295</name>
</gene>
<dbReference type="EMBL" id="AE017262">
    <property type="protein sequence ID" value="AAT04070.1"/>
    <property type="molecule type" value="Genomic_DNA"/>
</dbReference>
<dbReference type="RefSeq" id="WP_003731303.1">
    <property type="nucleotide sequence ID" value="NC_002973.6"/>
</dbReference>
<dbReference type="SMR" id="Q720E4"/>
<dbReference type="KEGG" id="lmf:LMOf2365_1295"/>
<dbReference type="HOGENOM" id="CLU_027562_9_0_9"/>
<dbReference type="GO" id="GO:0005737">
    <property type="term" value="C:cytoplasm"/>
    <property type="evidence" value="ECO:0007669"/>
    <property type="project" value="UniProtKB-SubCell"/>
</dbReference>
<dbReference type="GO" id="GO:0003677">
    <property type="term" value="F:DNA binding"/>
    <property type="evidence" value="ECO:0007669"/>
    <property type="project" value="UniProtKB-KW"/>
</dbReference>
<dbReference type="GO" id="GO:0009037">
    <property type="term" value="F:tyrosine-based site-specific recombinase activity"/>
    <property type="evidence" value="ECO:0007669"/>
    <property type="project" value="UniProtKB-UniRule"/>
</dbReference>
<dbReference type="GO" id="GO:0051301">
    <property type="term" value="P:cell division"/>
    <property type="evidence" value="ECO:0007669"/>
    <property type="project" value="UniProtKB-KW"/>
</dbReference>
<dbReference type="GO" id="GO:0007059">
    <property type="term" value="P:chromosome segregation"/>
    <property type="evidence" value="ECO:0007669"/>
    <property type="project" value="UniProtKB-UniRule"/>
</dbReference>
<dbReference type="GO" id="GO:0006313">
    <property type="term" value="P:DNA transposition"/>
    <property type="evidence" value="ECO:0007669"/>
    <property type="project" value="UniProtKB-UniRule"/>
</dbReference>
<dbReference type="CDD" id="cd00798">
    <property type="entry name" value="INT_XerDC_C"/>
    <property type="match status" value="1"/>
</dbReference>
<dbReference type="Gene3D" id="1.10.150.130">
    <property type="match status" value="1"/>
</dbReference>
<dbReference type="Gene3D" id="1.10.443.10">
    <property type="entry name" value="Intergrase catalytic core"/>
    <property type="match status" value="1"/>
</dbReference>
<dbReference type="HAMAP" id="MF_01808">
    <property type="entry name" value="Recomb_XerC_XerD"/>
    <property type="match status" value="1"/>
</dbReference>
<dbReference type="InterPro" id="IPR044068">
    <property type="entry name" value="CB"/>
</dbReference>
<dbReference type="InterPro" id="IPR011010">
    <property type="entry name" value="DNA_brk_join_enz"/>
</dbReference>
<dbReference type="InterPro" id="IPR013762">
    <property type="entry name" value="Integrase-like_cat_sf"/>
</dbReference>
<dbReference type="InterPro" id="IPR002104">
    <property type="entry name" value="Integrase_catalytic"/>
</dbReference>
<dbReference type="InterPro" id="IPR010998">
    <property type="entry name" value="Integrase_recombinase_N"/>
</dbReference>
<dbReference type="InterPro" id="IPR004107">
    <property type="entry name" value="Integrase_SAM-like_N"/>
</dbReference>
<dbReference type="InterPro" id="IPR011931">
    <property type="entry name" value="Recomb_XerC"/>
</dbReference>
<dbReference type="InterPro" id="IPR023009">
    <property type="entry name" value="Tyrosine_recombinase_XerC/XerD"/>
</dbReference>
<dbReference type="InterPro" id="IPR050090">
    <property type="entry name" value="Tyrosine_recombinase_XerCD"/>
</dbReference>
<dbReference type="NCBIfam" id="NF001399">
    <property type="entry name" value="PRK00283.1"/>
    <property type="match status" value="1"/>
</dbReference>
<dbReference type="NCBIfam" id="TIGR02224">
    <property type="entry name" value="recomb_XerC"/>
    <property type="match status" value="1"/>
</dbReference>
<dbReference type="PANTHER" id="PTHR30349">
    <property type="entry name" value="PHAGE INTEGRASE-RELATED"/>
    <property type="match status" value="1"/>
</dbReference>
<dbReference type="PANTHER" id="PTHR30349:SF77">
    <property type="entry name" value="TYROSINE RECOMBINASE XERC"/>
    <property type="match status" value="1"/>
</dbReference>
<dbReference type="Pfam" id="PF02899">
    <property type="entry name" value="Phage_int_SAM_1"/>
    <property type="match status" value="1"/>
</dbReference>
<dbReference type="Pfam" id="PF00589">
    <property type="entry name" value="Phage_integrase"/>
    <property type="match status" value="1"/>
</dbReference>
<dbReference type="SUPFAM" id="SSF56349">
    <property type="entry name" value="DNA breaking-rejoining enzymes"/>
    <property type="match status" value="1"/>
</dbReference>
<dbReference type="PROSITE" id="PS51900">
    <property type="entry name" value="CB"/>
    <property type="match status" value="1"/>
</dbReference>
<dbReference type="PROSITE" id="PS51898">
    <property type="entry name" value="TYR_RECOMBINASE"/>
    <property type="match status" value="1"/>
</dbReference>
<reference key="1">
    <citation type="journal article" date="2004" name="Nucleic Acids Res.">
        <title>Whole genome comparisons of serotype 4b and 1/2a strains of the food-borne pathogen Listeria monocytogenes reveal new insights into the core genome components of this species.</title>
        <authorList>
            <person name="Nelson K.E."/>
            <person name="Fouts D.E."/>
            <person name="Mongodin E.F."/>
            <person name="Ravel J."/>
            <person name="DeBoy R.T."/>
            <person name="Kolonay J.F."/>
            <person name="Rasko D.A."/>
            <person name="Angiuoli S.V."/>
            <person name="Gill S.R."/>
            <person name="Paulsen I.T."/>
            <person name="Peterson J.D."/>
            <person name="White O."/>
            <person name="Nelson W.C."/>
            <person name="Nierman W.C."/>
            <person name="Beanan M.J."/>
            <person name="Brinkac L.M."/>
            <person name="Daugherty S.C."/>
            <person name="Dodson R.J."/>
            <person name="Durkin A.S."/>
            <person name="Madupu R."/>
            <person name="Haft D.H."/>
            <person name="Selengut J."/>
            <person name="Van Aken S.E."/>
            <person name="Khouri H.M."/>
            <person name="Fedorova N."/>
            <person name="Forberger H.A."/>
            <person name="Tran B."/>
            <person name="Kathariou S."/>
            <person name="Wonderling L.D."/>
            <person name="Uhlich G.A."/>
            <person name="Bayles D.O."/>
            <person name="Luchansky J.B."/>
            <person name="Fraser C.M."/>
        </authorList>
    </citation>
    <scope>NUCLEOTIDE SEQUENCE [LARGE SCALE GENOMIC DNA]</scope>
    <source>
        <strain>F2365</strain>
    </source>
</reference>
<proteinExistence type="inferred from homology"/>
<evidence type="ECO:0000255" key="1">
    <source>
        <dbReference type="HAMAP-Rule" id="MF_01808"/>
    </source>
</evidence>
<evidence type="ECO:0000255" key="2">
    <source>
        <dbReference type="PROSITE-ProRule" id="PRU01246"/>
    </source>
</evidence>
<evidence type="ECO:0000255" key="3">
    <source>
        <dbReference type="PROSITE-ProRule" id="PRU01248"/>
    </source>
</evidence>
<feature type="chain" id="PRO_0000095303" description="Tyrosine recombinase XerC">
    <location>
        <begin position="1"/>
        <end position="300"/>
    </location>
</feature>
<feature type="domain" description="Core-binding (CB)" evidence="3">
    <location>
        <begin position="2"/>
        <end position="88"/>
    </location>
</feature>
<feature type="domain" description="Tyr recombinase" evidence="2">
    <location>
        <begin position="109"/>
        <end position="294"/>
    </location>
</feature>
<feature type="active site" evidence="1">
    <location>
        <position position="150"/>
    </location>
</feature>
<feature type="active site" evidence="1">
    <location>
        <position position="174"/>
    </location>
</feature>
<feature type="active site" evidence="1">
    <location>
        <position position="246"/>
    </location>
</feature>
<feature type="active site" evidence="1">
    <location>
        <position position="249"/>
    </location>
</feature>
<feature type="active site" evidence="1">
    <location>
        <position position="272"/>
    </location>
</feature>
<feature type="active site" description="O-(3'-phospho-DNA)-tyrosine intermediate" evidence="1">
    <location>
        <position position="281"/>
    </location>
</feature>
<accession>Q720E4</accession>
<organism>
    <name type="scientific">Listeria monocytogenes serotype 4b (strain F2365)</name>
    <dbReference type="NCBI Taxonomy" id="265669"/>
    <lineage>
        <taxon>Bacteria</taxon>
        <taxon>Bacillati</taxon>
        <taxon>Bacillota</taxon>
        <taxon>Bacilli</taxon>
        <taxon>Bacillales</taxon>
        <taxon>Listeriaceae</taxon>
        <taxon>Listeria</taxon>
    </lineage>
</organism>
<comment type="function">
    <text evidence="1">Site-specific tyrosine recombinase, which acts by catalyzing the cutting and rejoining of the recombining DNA molecules. The XerC-XerD complex is essential to convert dimers of the bacterial chromosome into monomers to permit their segregation at cell division. It also contributes to the segregational stability of plasmids.</text>
</comment>
<comment type="subunit">
    <text evidence="1">Forms a cyclic heterotetrameric complex composed of two molecules of XerC and two molecules of XerD.</text>
</comment>
<comment type="subcellular location">
    <subcellularLocation>
        <location evidence="1">Cytoplasm</location>
    </subcellularLocation>
</comment>
<comment type="similarity">
    <text evidence="1">Belongs to the 'phage' integrase family. XerC subfamily.</text>
</comment>
<protein>
    <recommendedName>
        <fullName evidence="1">Tyrosine recombinase XerC</fullName>
    </recommendedName>
</protein>
<sequence length="300" mass="35002">MIQEGKLEQQFFDYLHSERNYSVNTSTAYENDLLDFRRFLNEQAITTYQQVTFLDVRIYLTELKQKSFSRTTVARKISSLRSFYTFLLRENVINENPFTYVSHAKNQLRLPKFFYSEEMEALFQVVYEDNETLTLRDRVLLEVLYGTGIRVSECAGILLPDLDTSYQAILIRGKGNKERYVPFGVYAEDAITDYLPERANLMSRYKKSHDALLVNHYGDPLTTRGIRYCLSKIISKASLTRKIHPHMLRHTFATDLLNNGADMRTVQELLGHASLSSTQIYTHVTKEHLKSTYMKHHPRA</sequence>
<name>XERC_LISMF</name>